<evidence type="ECO:0000250" key="1"/>
<evidence type="ECO:0000255" key="2"/>
<evidence type="ECO:0000255" key="3">
    <source>
        <dbReference type="PROSITE-ProRule" id="PRU10074"/>
    </source>
</evidence>
<evidence type="ECO:0000256" key="4">
    <source>
        <dbReference type="SAM" id="MobiDB-lite"/>
    </source>
</evidence>
<evidence type="ECO:0000305" key="5"/>
<accession>B6QQZ9</accession>
<feature type="signal peptide" evidence="2">
    <location>
        <begin position="1"/>
        <end position="18"/>
    </location>
</feature>
<feature type="chain" id="PRO_0000411934" description="Pheromone-processing carboxypeptidase kex1">
    <location>
        <begin position="19"/>
        <end position="626"/>
    </location>
</feature>
<feature type="topological domain" description="Lumenal" evidence="2">
    <location>
        <begin position="19"/>
        <end position="504"/>
    </location>
</feature>
<feature type="transmembrane region" description="Helical" evidence="2">
    <location>
        <begin position="505"/>
        <end position="525"/>
    </location>
</feature>
<feature type="topological domain" description="Cytoplasmic" evidence="2">
    <location>
        <begin position="526"/>
        <end position="626"/>
    </location>
</feature>
<feature type="region of interest" description="Disordered" evidence="4">
    <location>
        <begin position="460"/>
        <end position="489"/>
    </location>
</feature>
<feature type="region of interest" description="Disordered" evidence="4">
    <location>
        <begin position="558"/>
        <end position="582"/>
    </location>
</feature>
<feature type="region of interest" description="Disordered" evidence="4">
    <location>
        <begin position="606"/>
        <end position="626"/>
    </location>
</feature>
<feature type="compositionally biased region" description="Low complexity" evidence="4">
    <location>
        <begin position="474"/>
        <end position="486"/>
    </location>
</feature>
<feature type="compositionally biased region" description="Low complexity" evidence="4">
    <location>
        <begin position="564"/>
        <end position="575"/>
    </location>
</feature>
<feature type="compositionally biased region" description="Acidic residues" evidence="4">
    <location>
        <begin position="607"/>
        <end position="616"/>
    </location>
</feature>
<feature type="active site" evidence="3">
    <location>
        <position position="170"/>
    </location>
</feature>
<feature type="active site" evidence="3">
    <location>
        <position position="370"/>
    </location>
</feature>
<feature type="active site" evidence="3">
    <location>
        <position position="432"/>
    </location>
</feature>
<feature type="glycosylation site" description="N-linked (GlcNAc...) asparagine" evidence="2">
    <location>
        <position position="106"/>
    </location>
</feature>
<feature type="glycosylation site" description="N-linked (GlcNAc...) asparagine" evidence="2">
    <location>
        <position position="421"/>
    </location>
</feature>
<feature type="glycosylation site" description="N-linked (GlcNAc...) asparagine" evidence="2">
    <location>
        <position position="429"/>
    </location>
</feature>
<feature type="glycosylation site" description="N-linked (GlcNAc...) asparagine" evidence="2">
    <location>
        <position position="478"/>
    </location>
</feature>
<gene>
    <name type="primary">kex1</name>
    <name type="ORF">PMAA_045500</name>
</gene>
<protein>
    <recommendedName>
        <fullName>Pheromone-processing carboxypeptidase kex1</fullName>
        <ecNumber>3.4.16.6</ecNumber>
    </recommendedName>
    <alternativeName>
        <fullName>Carboxypeptidase D</fullName>
    </alternativeName>
</protein>
<proteinExistence type="inferred from homology"/>
<organism>
    <name type="scientific">Talaromyces marneffei (strain ATCC 18224 / CBS 334.59 / QM 7333)</name>
    <name type="common">Penicillium marneffei</name>
    <dbReference type="NCBI Taxonomy" id="441960"/>
    <lineage>
        <taxon>Eukaryota</taxon>
        <taxon>Fungi</taxon>
        <taxon>Dikarya</taxon>
        <taxon>Ascomycota</taxon>
        <taxon>Pezizomycotina</taxon>
        <taxon>Eurotiomycetes</taxon>
        <taxon>Eurotiomycetidae</taxon>
        <taxon>Eurotiales</taxon>
        <taxon>Trichocomaceae</taxon>
        <taxon>Talaromyces</taxon>
        <taxon>Talaromyces sect. Talaromyces</taxon>
    </lineage>
</organism>
<name>KEX1_TALMQ</name>
<comment type="function">
    <text evidence="1">Protease with a carboxypeptidase B-like function involved in the C-terminal processing of the lysine and arginine residues from protein precursors. Promotes cell fusion and is involved in the programmed cell death (By similarity).</text>
</comment>
<comment type="catalytic activity">
    <reaction>
        <text>Preferential release of a C-terminal arginine or lysine residue.</text>
        <dbReference type="EC" id="3.4.16.6"/>
    </reaction>
</comment>
<comment type="subcellular location">
    <subcellularLocation>
        <location evidence="1">Golgi apparatus</location>
        <location evidence="1">trans-Golgi network membrane</location>
        <topology evidence="1">Single-pass type I membrane protein</topology>
    </subcellularLocation>
</comment>
<comment type="similarity">
    <text evidence="5">Belongs to the peptidase S10 family.</text>
</comment>
<sequence length="626" mass="69623">MLGKALLLLLSSPICAWAQSAADYYVKSIPGQPDGPLLKMHAGHVEVDAETNGHLFFWHFQNRHIANRQRTILWLNGGPGCSSMDGALMEIGPYRVKDDHTLIYNNGSWDEFANLLFVDQPVGTGFSYVNTNSYLHDLDHVAAHMITFLEKWFAMFPEYESDDLYIAGESYAGQYIPHIARAIVERNKNIQRNQQHWPIKGLLIGNGWISPRDQYPANLQYAYAEGIVKEGTAIANELDGIEKSCDEQLNAPGAGDLVDIRQCESILNKLLDLTRTSDDQCINVYDIRLKDATCGNAWPPDLDQMTDYLRRADVGAALNLDNGKANGWTECNNQVTANFRMGHNGVPSIQLLPGLIESGVKVLLFSGDRDLICNHLGTESLIHNMKWSGGTGFETKPGVWAPRRGWTFEGEAAGYYQQARNLTYVLFYNASHMVPYDFPRRTRDMVDRFINVDIANIGGPPADSRLDGEKLPQTSVGNTTSSTSGTDQVDEAKLKDAEWKAYTKSGEAALIVVIIGVSVWGFFIWRARQRAARDGTSPTKKGYRAVYQDGVDNNSSTDGAGLLSRFRNQSNSNSSRDLEARDFDEAELDSLTPNLQNGHERDHYVIGEEDEDEDNDIGNGAKSSLH</sequence>
<dbReference type="EC" id="3.4.16.6"/>
<dbReference type="EMBL" id="DS995904">
    <property type="protein sequence ID" value="EEA20727.1"/>
    <property type="molecule type" value="Genomic_DNA"/>
</dbReference>
<dbReference type="RefSeq" id="XP_002151727.1">
    <property type="nucleotide sequence ID" value="XM_002151691.1"/>
</dbReference>
<dbReference type="SMR" id="B6QQZ9"/>
<dbReference type="STRING" id="441960.B6QQZ9"/>
<dbReference type="ESTHER" id="talmq-kex1">
    <property type="family name" value="Carboxypeptidase_S10"/>
</dbReference>
<dbReference type="MEROPS" id="S10.007"/>
<dbReference type="GlyCosmos" id="B6QQZ9">
    <property type="glycosylation" value="4 sites, No reported glycans"/>
</dbReference>
<dbReference type="VEuPathDB" id="FungiDB:PMAA_045500"/>
<dbReference type="HOGENOM" id="CLU_008523_11_0_1"/>
<dbReference type="OrthoDB" id="1323at28568"/>
<dbReference type="PhylomeDB" id="B6QQZ9"/>
<dbReference type="Proteomes" id="UP000001294">
    <property type="component" value="Unassembled WGS sequence"/>
</dbReference>
<dbReference type="GO" id="GO:0016020">
    <property type="term" value="C:membrane"/>
    <property type="evidence" value="ECO:0007669"/>
    <property type="project" value="UniProtKB-KW"/>
</dbReference>
<dbReference type="GO" id="GO:0005802">
    <property type="term" value="C:trans-Golgi network"/>
    <property type="evidence" value="ECO:0007669"/>
    <property type="project" value="TreeGrafter"/>
</dbReference>
<dbReference type="GO" id="GO:0004185">
    <property type="term" value="F:serine-type carboxypeptidase activity"/>
    <property type="evidence" value="ECO:0007669"/>
    <property type="project" value="UniProtKB-EC"/>
</dbReference>
<dbReference type="GO" id="GO:0006915">
    <property type="term" value="P:apoptotic process"/>
    <property type="evidence" value="ECO:0007669"/>
    <property type="project" value="UniProtKB-KW"/>
</dbReference>
<dbReference type="GO" id="GO:0006508">
    <property type="term" value="P:proteolysis"/>
    <property type="evidence" value="ECO:0007669"/>
    <property type="project" value="UniProtKB-KW"/>
</dbReference>
<dbReference type="FunFam" id="3.40.50.1820:FF:000121">
    <property type="entry name" value="Carboxypeptidase D"/>
    <property type="match status" value="1"/>
</dbReference>
<dbReference type="Gene3D" id="3.40.50.1820">
    <property type="entry name" value="alpha/beta hydrolase"/>
    <property type="match status" value="1"/>
</dbReference>
<dbReference type="InterPro" id="IPR029058">
    <property type="entry name" value="AB_hydrolase_fold"/>
</dbReference>
<dbReference type="InterPro" id="IPR001563">
    <property type="entry name" value="Peptidase_S10"/>
</dbReference>
<dbReference type="InterPro" id="IPR018202">
    <property type="entry name" value="Ser_caboxypep_ser_AS"/>
</dbReference>
<dbReference type="PANTHER" id="PTHR11802:SF190">
    <property type="entry name" value="PHEROMONE-PROCESSING CARBOXYPEPTIDASE KEX1"/>
    <property type="match status" value="1"/>
</dbReference>
<dbReference type="PANTHER" id="PTHR11802">
    <property type="entry name" value="SERINE PROTEASE FAMILY S10 SERINE CARBOXYPEPTIDASE"/>
    <property type="match status" value="1"/>
</dbReference>
<dbReference type="Pfam" id="PF00450">
    <property type="entry name" value="Peptidase_S10"/>
    <property type="match status" value="1"/>
</dbReference>
<dbReference type="PRINTS" id="PR00724">
    <property type="entry name" value="CRBOXYPTASEC"/>
</dbReference>
<dbReference type="SUPFAM" id="SSF53474">
    <property type="entry name" value="alpha/beta-Hydrolases"/>
    <property type="match status" value="1"/>
</dbReference>
<dbReference type="PROSITE" id="PS00131">
    <property type="entry name" value="CARBOXYPEPT_SER_SER"/>
    <property type="match status" value="1"/>
</dbReference>
<reference key="1">
    <citation type="journal article" date="2015" name="Genome Announc.">
        <title>Genome sequence of the AIDS-associated pathogen Penicillium marneffei (ATCC18224) and its near taxonomic relative Talaromyces stipitatus (ATCC10500).</title>
        <authorList>
            <person name="Nierman W.C."/>
            <person name="Fedorova-Abrams N.D."/>
            <person name="Andrianopoulos A."/>
        </authorList>
    </citation>
    <scope>NUCLEOTIDE SEQUENCE [LARGE SCALE GENOMIC DNA]</scope>
    <source>
        <strain>ATCC 18224 / CBS 334.59 / QM 7333</strain>
    </source>
</reference>
<keyword id="KW-0053">Apoptosis</keyword>
<keyword id="KW-0121">Carboxypeptidase</keyword>
<keyword id="KW-0325">Glycoprotein</keyword>
<keyword id="KW-0333">Golgi apparatus</keyword>
<keyword id="KW-0378">Hydrolase</keyword>
<keyword id="KW-0472">Membrane</keyword>
<keyword id="KW-0645">Protease</keyword>
<keyword id="KW-1185">Reference proteome</keyword>
<keyword id="KW-0732">Signal</keyword>
<keyword id="KW-0812">Transmembrane</keyword>
<keyword id="KW-1133">Transmembrane helix</keyword>